<reference key="1">
    <citation type="journal article" date="2009" name="Proc. Natl. Acad. Sci. U.S.A.">
        <title>Eukaryote-to-eukaryote gene transfer events revealed by the genome sequence of the wine yeast Saccharomyces cerevisiae EC1118.</title>
        <authorList>
            <person name="Novo M."/>
            <person name="Bigey F."/>
            <person name="Beyne E."/>
            <person name="Galeote V."/>
            <person name="Gavory F."/>
            <person name="Mallet S."/>
            <person name="Cambon B."/>
            <person name="Legras J.-L."/>
            <person name="Wincker P."/>
            <person name="Casaregola S."/>
            <person name="Dequin S."/>
        </authorList>
    </citation>
    <scope>NUCLEOTIDE SEQUENCE [LARGE SCALE GENOMIC DNA]</scope>
    <source>
        <strain>Lalvin EC1118 / Prise de mousse</strain>
    </source>
</reference>
<evidence type="ECO:0000250" key="1"/>
<evidence type="ECO:0000305" key="2"/>
<sequence>MSRKLCTLNFTLSGKQGSLVIRDIQLWSNRPTASKSTSELRGQFIQYVDLAKLPLWVRSTNMNTYRCYSTSATAQAYFKSKLRNANRGIVIELSDKVDQRSQEPAYLIIFREKTELNCFQVDLTMKHEFDGQVTKLKQEIGKTRASVSKEGSIDIIIQQSQQRKIGTKTKVYRNVHINDKRLQFNETLSKLILGGLRLRGISNSITDYQKLYKITFDAAEFTHRDELKRISMGSVEEVSFESLQETVETLLKLFTKS</sequence>
<name>SLD7_YEAS8</name>
<keyword id="KW-0131">Cell cycle</keyword>
<keyword id="KW-0963">Cytoplasm</keyword>
<keyword id="KW-0206">Cytoskeleton</keyword>
<keyword id="KW-0235">DNA replication</keyword>
<keyword id="KW-0539">Nucleus</keyword>
<protein>
    <recommendedName>
        <fullName>Mitochondrial morphogenesis protein SLD7</fullName>
    </recommendedName>
    <alternativeName>
        <fullName>Synthetic lethality with DPB11-24 mutation protein 7</fullName>
    </alternativeName>
</protein>
<accession>C8ZI21</accession>
<feature type="chain" id="PRO_0000411033" description="Mitochondrial morphogenesis protein SLD7">
    <location>
        <begin position="1"/>
        <end position="257"/>
    </location>
</feature>
<gene>
    <name type="primary">SLD7</name>
    <name type="ORF">EC1118_1O4_2608g</name>
</gene>
<dbReference type="EMBL" id="FN394216">
    <property type="protein sequence ID" value="CAY86346.1"/>
    <property type="molecule type" value="Genomic_DNA"/>
</dbReference>
<dbReference type="SMR" id="C8ZI21"/>
<dbReference type="HOGENOM" id="CLU_072105_0_0_1"/>
<dbReference type="OrthoDB" id="34738at4893"/>
<dbReference type="Proteomes" id="UP000000286">
    <property type="component" value="Chromosome XV, Scaffold EC1118_1O4"/>
</dbReference>
<dbReference type="GO" id="GO:0005737">
    <property type="term" value="C:cytoplasm"/>
    <property type="evidence" value="ECO:0007669"/>
    <property type="project" value="UniProtKB-KW"/>
</dbReference>
<dbReference type="GO" id="GO:0005634">
    <property type="term" value="C:nucleus"/>
    <property type="evidence" value="ECO:0007669"/>
    <property type="project" value="UniProtKB-SubCell"/>
</dbReference>
<dbReference type="GO" id="GO:0000922">
    <property type="term" value="C:spindle pole"/>
    <property type="evidence" value="ECO:0007669"/>
    <property type="project" value="UniProtKB-SubCell"/>
</dbReference>
<dbReference type="GO" id="GO:0006260">
    <property type="term" value="P:DNA replication"/>
    <property type="evidence" value="ECO:0007669"/>
    <property type="project" value="UniProtKB-KW"/>
</dbReference>
<dbReference type="GO" id="GO:0030174">
    <property type="term" value="P:regulation of DNA-templated DNA replication initiation"/>
    <property type="evidence" value="ECO:0007669"/>
    <property type="project" value="InterPro"/>
</dbReference>
<dbReference type="InterPro" id="IPR016808">
    <property type="entry name" value="Sld7"/>
</dbReference>
<dbReference type="InterPro" id="IPR041260">
    <property type="entry name" value="Sld7_C"/>
</dbReference>
<dbReference type="InterPro" id="IPR041564">
    <property type="entry name" value="Sld7_N"/>
</dbReference>
<dbReference type="Pfam" id="PF18596">
    <property type="entry name" value="Sld7_C"/>
    <property type="match status" value="1"/>
</dbReference>
<dbReference type="Pfam" id="PF18636">
    <property type="entry name" value="Sld7_N"/>
    <property type="match status" value="1"/>
</dbReference>
<dbReference type="PIRSF" id="PIRSF022788">
    <property type="entry name" value="UCP022788"/>
    <property type="match status" value="1"/>
</dbReference>
<organism>
    <name type="scientific">Saccharomyces cerevisiae (strain Lalvin EC1118 / Prise de mousse)</name>
    <name type="common">Baker's yeast</name>
    <dbReference type="NCBI Taxonomy" id="643680"/>
    <lineage>
        <taxon>Eukaryota</taxon>
        <taxon>Fungi</taxon>
        <taxon>Dikarya</taxon>
        <taxon>Ascomycota</taxon>
        <taxon>Saccharomycotina</taxon>
        <taxon>Saccharomycetes</taxon>
        <taxon>Saccharomycetales</taxon>
        <taxon>Saccharomycetaceae</taxon>
        <taxon>Saccharomyces</taxon>
    </lineage>
</organism>
<comment type="function">
    <text evidence="1">Required for the proper function of SLD3 at the initiation of DNA replication. Binds to SLD3 and reduces its affinity for CDC45, a component of the replication fork. Required for mitochondrial morphology (By similarity).</text>
</comment>
<comment type="subunit">
    <text evidence="1">Interacts with SLD3.</text>
</comment>
<comment type="subcellular location">
    <subcellularLocation>
        <location evidence="1">Nucleus</location>
    </subcellularLocation>
    <subcellularLocation>
        <location evidence="1">Cytoplasm</location>
        <location evidence="1">Cytoskeleton</location>
        <location evidence="1">Spindle pole</location>
    </subcellularLocation>
</comment>
<comment type="similarity">
    <text evidence="2">Belongs to the SLD7 family.</text>
</comment>
<proteinExistence type="inferred from homology"/>